<sequence length="158" mass="18243">MLNQLDNLTERVRGSNKLVDRWLHVRKHLLVAYYNLVGIKPGKESYMRLNEKALDDFCQSLVDYLSAGHFSIYERILHKLEGNGQLARAAKIWPQLEANTQQIMDYYDSSLETAIDHDNYLEFQQVLSDIGEALEARFVLEDKLILLVLDAARVKHPA</sequence>
<accession>B5Z091</accession>
<comment type="function">
    <text evidence="1">Binds RpoD and negatively regulates RpoD-mediated transcription activation by preventing the interaction between the primary sigma factor RpoD with the catalytic core of the RNA polymerase and with promoter DNA. May be involved in replacement of the RNA polymerase sigma subunit from RpoD to RpoS during the transition from exponential growth to the stationary phase.</text>
</comment>
<comment type="subunit">
    <text evidence="1">Interacts with RpoD.</text>
</comment>
<comment type="subcellular location">
    <subcellularLocation>
        <location evidence="1">Cytoplasm</location>
    </subcellularLocation>
</comment>
<comment type="similarity">
    <text evidence="1">Belongs to the Rsd/AlgQ family.</text>
</comment>
<keyword id="KW-0963">Cytoplasm</keyword>
<keyword id="KW-0804">Transcription</keyword>
<keyword id="KW-0805">Transcription regulation</keyword>
<protein>
    <recommendedName>
        <fullName evidence="1">Regulator of sigma D</fullName>
    </recommendedName>
</protein>
<proteinExistence type="inferred from homology"/>
<dbReference type="EMBL" id="CP001164">
    <property type="protein sequence ID" value="ACI35720.1"/>
    <property type="molecule type" value="Genomic_DNA"/>
</dbReference>
<dbReference type="RefSeq" id="WP_000934302.1">
    <property type="nucleotide sequence ID" value="NC_011353.1"/>
</dbReference>
<dbReference type="SMR" id="B5Z091"/>
<dbReference type="GeneID" id="75205513"/>
<dbReference type="KEGG" id="ecf:ECH74115_5464"/>
<dbReference type="HOGENOM" id="CLU_142729_0_0_6"/>
<dbReference type="GO" id="GO:0005737">
    <property type="term" value="C:cytoplasm"/>
    <property type="evidence" value="ECO:0007669"/>
    <property type="project" value="UniProtKB-SubCell"/>
</dbReference>
<dbReference type="GO" id="GO:0006355">
    <property type="term" value="P:regulation of DNA-templated transcription"/>
    <property type="evidence" value="ECO:0007669"/>
    <property type="project" value="InterPro"/>
</dbReference>
<dbReference type="FunFam" id="1.20.120.1370:FF:000001">
    <property type="entry name" value="Regulator of sigma D"/>
    <property type="match status" value="1"/>
</dbReference>
<dbReference type="Gene3D" id="1.20.120.1370">
    <property type="entry name" value="Regulator of RNA polymerase sigma(70) subunit, domain 4"/>
    <property type="match status" value="1"/>
</dbReference>
<dbReference type="HAMAP" id="MF_01181">
    <property type="entry name" value="Rsd"/>
    <property type="match status" value="1"/>
</dbReference>
<dbReference type="InterPro" id="IPR038309">
    <property type="entry name" value="Rsd/AlgQ_sf"/>
</dbReference>
<dbReference type="InterPro" id="IPR023785">
    <property type="entry name" value="Sigma70_reg_Rsd"/>
</dbReference>
<dbReference type="InterPro" id="IPR007448">
    <property type="entry name" value="Sigma70_reg_Rsd_AlgQ"/>
</dbReference>
<dbReference type="NCBIfam" id="NF008723">
    <property type="entry name" value="PRK11718.1"/>
    <property type="match status" value="1"/>
</dbReference>
<dbReference type="Pfam" id="PF04353">
    <property type="entry name" value="Rsd_AlgQ"/>
    <property type="match status" value="1"/>
</dbReference>
<dbReference type="PIRSF" id="PIRSF016548">
    <property type="entry name" value="Rsd_AlgQ"/>
    <property type="match status" value="1"/>
</dbReference>
<reference key="1">
    <citation type="journal article" date="2011" name="Proc. Natl. Acad. Sci. U.S.A.">
        <title>Genomic anatomy of Escherichia coli O157:H7 outbreaks.</title>
        <authorList>
            <person name="Eppinger M."/>
            <person name="Mammel M.K."/>
            <person name="Leclerc J.E."/>
            <person name="Ravel J."/>
            <person name="Cebula T.A."/>
        </authorList>
    </citation>
    <scope>NUCLEOTIDE SEQUENCE [LARGE SCALE GENOMIC DNA]</scope>
    <source>
        <strain>EC4115 / EHEC</strain>
    </source>
</reference>
<evidence type="ECO:0000255" key="1">
    <source>
        <dbReference type="HAMAP-Rule" id="MF_01181"/>
    </source>
</evidence>
<gene>
    <name evidence="1" type="primary">rsd</name>
    <name type="ordered locus">ECH74115_5464</name>
</gene>
<name>RSD_ECO5E</name>
<feature type="chain" id="PRO_1000138189" description="Regulator of sigma D">
    <location>
        <begin position="1"/>
        <end position="158"/>
    </location>
</feature>
<organism>
    <name type="scientific">Escherichia coli O157:H7 (strain EC4115 / EHEC)</name>
    <dbReference type="NCBI Taxonomy" id="444450"/>
    <lineage>
        <taxon>Bacteria</taxon>
        <taxon>Pseudomonadati</taxon>
        <taxon>Pseudomonadota</taxon>
        <taxon>Gammaproteobacteria</taxon>
        <taxon>Enterobacterales</taxon>
        <taxon>Enterobacteriaceae</taxon>
        <taxon>Escherichia</taxon>
    </lineage>
</organism>